<organism>
    <name type="scientific">Mus musculus</name>
    <name type="common">Mouse</name>
    <dbReference type="NCBI Taxonomy" id="10090"/>
    <lineage>
        <taxon>Eukaryota</taxon>
        <taxon>Metazoa</taxon>
        <taxon>Chordata</taxon>
        <taxon>Craniata</taxon>
        <taxon>Vertebrata</taxon>
        <taxon>Euteleostomi</taxon>
        <taxon>Mammalia</taxon>
        <taxon>Eutheria</taxon>
        <taxon>Euarchontoglires</taxon>
        <taxon>Glires</taxon>
        <taxon>Rodentia</taxon>
        <taxon>Myomorpha</taxon>
        <taxon>Muroidea</taxon>
        <taxon>Muridae</taxon>
        <taxon>Murinae</taxon>
        <taxon>Mus</taxon>
        <taxon>Mus</taxon>
    </lineage>
</organism>
<comment type="function">
    <text evidence="2 5 8 9">Acts as an inhibitor of the small GTPase RHOA and plays several roles in the regulation of myoblast and hair cell differentiation, lymphocyte T proliferation and neutrophil polarization (PubMed:25588844, PubMed:27269051). Plays a role in fetal mononuclear myoblast differentiation by promoting filopodia and myotube formation (PubMed:17150207). Maintains naive T lymphocytes in a quiescent state and prevents chemokine-induced T lymphocyte responses, such as cell adhesion, polarization and migration (By similarity). Involved also in the regulation of neutrophil polarization, chemotaxis and adhesion (PubMed:25588844). Required for normal development of inner and outer hair cell stereocilia within the cochlea of the inner ear (PubMed:27269051). Plays a role for maintaining the structural organization of the basal domain of stereocilia (PubMed:27269051). Involved in mechanosensory hair cell function (PubMed:27269051). Required for normal hearing (PubMed:27269051).</text>
</comment>
<comment type="subunit">
    <text evidence="2 6 9 10">Homooligomer; homooligomerization is regulated by RHOC and leads to the formation of concatemers through the association of N- and C-termini (PubMed:27269051, PubMed:32631815). Interacts (phosphorylated form) with 14-3-3 proteins; these interactions occur during myogenic cell differentiation and also induces T cell proliferation arrest (By similarity). Interacts (phosphorylated form) with HDAC6; this interaction occurs during early myogenic differentiation, prevents HDAC6 to deacetylate tubulin and also induces T cell proliferation arrest (By similarity). Interacts with DYSF; this interaction occurs during early myogenic differentiation (PubMed:24687993). Interacts with MYOF (By similarity). Interacts (via active GTP- or inactive GDP-bound forms) with RHOA; this interaction is direct, blocks the loading of GTP to RHOA and decreases upon chemokine CCL19 stimulation in primary T lymphocytes (PubMed:27269051). Interacts with RHOC (PubMed:27269051, PubMed:32631815). Interacts (via phosphorylated form) with YWHAB; this interaction occurs in a chemokine-dependent manner and does not compete for binding of RIPOR2 with RHOA nor blocks inhibition of RIPOR2-mediated RHOA activity (By similarity). Interacts with YWHAE (By similarity). Interacts with YWHAQ (By similarity).</text>
</comment>
<comment type="subcellular location">
    <subcellularLocation>
        <location evidence="2">Cytoplasm</location>
    </subcellularLocation>
    <subcellularLocation>
        <location evidence="2">Cytoplasm</location>
        <location evidence="2">Cytoskeleton</location>
    </subcellularLocation>
    <subcellularLocation>
        <location evidence="2">Cell projection</location>
        <location evidence="2">Filopodium</location>
    </subcellularLocation>
    <subcellularLocation>
        <location evidence="9 10">Cell projection</location>
        <location evidence="9 10">Stereocilium</location>
    </subcellularLocation>
    <subcellularLocation>
        <location evidence="1">Cell projection</location>
        <location evidence="1">Stereocilium membrane</location>
    </subcellularLocation>
    <subcellularLocation>
        <location evidence="1">Apical cell membrane</location>
    </subcellularLocation>
    <text evidence="2 9">Localized in the cytoplasm in cells undergoing mitosis (By similarity). Colocalized with F-actin (By similarity). Accumulates at the leading edge of polarized neutrophils in a chemokine-dependent manner (By similarity). Localized with RHOC within the basal domain of hair cell stereocilia, near the taper region (PubMed:27269051). Detected in punctate pattern forming a circumferential ring at the stereocilia base (PubMed:27269051). Localized to the apical stereocilia of inner and outer hair cells (By similarity). Not detected as a membrane-associated protein in stereocilia (PubMed:27269051).</text>
</comment>
<comment type="alternative products">
    <event type="alternative splicing"/>
    <isoform>
        <id>Q80U16-1</id>
        <name>1</name>
        <sequence type="displayed"/>
    </isoform>
    <isoform>
        <id>Q80U16-2</id>
        <name>2</name>
        <sequence type="described" ref="VSP_025914 VSP_025917"/>
    </isoform>
    <isoform>
        <id>Q80U16-3</id>
        <name>3</name>
        <sequence type="described" ref="VSP_025910 VSP_025913"/>
    </isoform>
    <isoform>
        <id>Q80U16-4</id>
        <name>4</name>
        <sequence type="described" ref="VSP_025911 VSP_025912"/>
    </isoform>
    <isoform>
        <id>Q80U16-5</id>
        <name>5</name>
        <sequence type="described" ref="VSP_025908 VSP_025909 VSP_025914 VSP_025917"/>
    </isoform>
    <isoform>
        <id>Q80U16-6</id>
        <name>6</name>
        <sequence type="described" ref="VSP_025908 VSP_025909 VSP_025915 VSP_025916"/>
    </isoform>
    <isoform>
        <id>Q80U16-7</id>
        <name>7</name>
        <sequence type="described" ref="VSP_025907 VSP_025909 VSP_025914 VSP_025917"/>
    </isoform>
</comment>
<comment type="tissue specificity">
    <text evidence="7 9 10">Expressed in the cochlea (PubMed:24958875, PubMed:32631815). Expressed in inner hair cells and outer hair cells and Hensen's cells (at protein level) (PubMed:27269051, PubMed:32631815). Expressed in the brain, cerebellum, spinal cord, retina, heart, spleen liver, kidney, bladder, muscle and lung (PubMed:24958875, PubMed:27269051). Expressed in the cochlea of the inner ear (PubMed:24958875, PubMed:27269051).</text>
</comment>
<comment type="induction">
    <text evidence="6">Up-regulated during regenerating muscle tissue.</text>
</comment>
<comment type="PTM">
    <text evidence="2">Phosphorylated. Chemokine-induced phosphorylation in neutrophils occurs in a PKC- and AKT-dependent manner, resulting in RIPOR2 interaction with YWHAB and stabilization. Phosphorylated by PKCA, AKT1 and MAPKAPK1A; in vitro.</text>
</comment>
<comment type="disruption phenotype">
    <text evidence="8 9">Mice are deaf at 4 weeks of age (PubMed:27269051). Show abnormal hair bundle morphology and polarity and stereociliary growth in the cochlea of the inner ear (PubMed:27269051). Display mislocalization of protein TPRN to the base of stereocilia (PubMed:27269051). Show reduced mechanotransduction currents in hair bundles of outer hair cells (PubMed:27269051). Mice show impaired neutrophil chemotaxis, increased neutrophil adhesion to endothelial cell and reduced neutrophil infiltration into inflamed peritonea (PubMed:25588844). Display increased chemokine-induced RHOA activity and mislocalization of myosin light chain MYL2 in neutrophils (PubMed:25588844).</text>
</comment>
<comment type="similarity">
    <text evidence="12">Belongs to the RIPOR family.</text>
</comment>
<comment type="sequence caution" evidence="12">
    <conflict type="erroneous initiation">
        <sequence resource="EMBL-CDS" id="BAC65551"/>
    </conflict>
    <text>Extended N-terminus.</text>
</comment>
<reference key="1">
    <citation type="journal article" date="2003" name="DNA Res.">
        <title>Prediction of the coding sequences of mouse homologues of KIAA gene: II. The complete nucleotide sequences of 400 mouse KIAA-homologous cDNAs identified by screening of terminal sequences of cDNA clones randomly sampled from size-fractionated libraries.</title>
        <authorList>
            <person name="Okazaki N."/>
            <person name="Kikuno R."/>
            <person name="Ohara R."/>
            <person name="Inamoto S."/>
            <person name="Aizawa H."/>
            <person name="Yuasa S."/>
            <person name="Nakajima D."/>
            <person name="Nagase T."/>
            <person name="Ohara O."/>
            <person name="Koga H."/>
        </authorList>
    </citation>
    <scope>NUCLEOTIDE SEQUENCE [LARGE SCALE MRNA] (ISOFORM 1)</scope>
    <source>
        <tissue>Brain</tissue>
    </source>
</reference>
<reference key="2">
    <citation type="journal article" date="2005" name="Science">
        <title>The transcriptional landscape of the mammalian genome.</title>
        <authorList>
            <person name="Carninci P."/>
            <person name="Kasukawa T."/>
            <person name="Katayama S."/>
            <person name="Gough J."/>
            <person name="Frith M.C."/>
            <person name="Maeda N."/>
            <person name="Oyama R."/>
            <person name="Ravasi T."/>
            <person name="Lenhard B."/>
            <person name="Wells C."/>
            <person name="Kodzius R."/>
            <person name="Shimokawa K."/>
            <person name="Bajic V.B."/>
            <person name="Brenner S.E."/>
            <person name="Batalov S."/>
            <person name="Forrest A.R."/>
            <person name="Zavolan M."/>
            <person name="Davis M.J."/>
            <person name="Wilming L.G."/>
            <person name="Aidinis V."/>
            <person name="Allen J.E."/>
            <person name="Ambesi-Impiombato A."/>
            <person name="Apweiler R."/>
            <person name="Aturaliya R.N."/>
            <person name="Bailey T.L."/>
            <person name="Bansal M."/>
            <person name="Baxter L."/>
            <person name="Beisel K.W."/>
            <person name="Bersano T."/>
            <person name="Bono H."/>
            <person name="Chalk A.M."/>
            <person name="Chiu K.P."/>
            <person name="Choudhary V."/>
            <person name="Christoffels A."/>
            <person name="Clutterbuck D.R."/>
            <person name="Crowe M.L."/>
            <person name="Dalla E."/>
            <person name="Dalrymple B.P."/>
            <person name="de Bono B."/>
            <person name="Della Gatta G."/>
            <person name="di Bernardo D."/>
            <person name="Down T."/>
            <person name="Engstrom P."/>
            <person name="Fagiolini M."/>
            <person name="Faulkner G."/>
            <person name="Fletcher C.F."/>
            <person name="Fukushima T."/>
            <person name="Furuno M."/>
            <person name="Futaki S."/>
            <person name="Gariboldi M."/>
            <person name="Georgii-Hemming P."/>
            <person name="Gingeras T.R."/>
            <person name="Gojobori T."/>
            <person name="Green R.E."/>
            <person name="Gustincich S."/>
            <person name="Harbers M."/>
            <person name="Hayashi Y."/>
            <person name="Hensch T.K."/>
            <person name="Hirokawa N."/>
            <person name="Hill D."/>
            <person name="Huminiecki L."/>
            <person name="Iacono M."/>
            <person name="Ikeo K."/>
            <person name="Iwama A."/>
            <person name="Ishikawa T."/>
            <person name="Jakt M."/>
            <person name="Kanapin A."/>
            <person name="Katoh M."/>
            <person name="Kawasawa Y."/>
            <person name="Kelso J."/>
            <person name="Kitamura H."/>
            <person name="Kitano H."/>
            <person name="Kollias G."/>
            <person name="Krishnan S.P."/>
            <person name="Kruger A."/>
            <person name="Kummerfeld S.K."/>
            <person name="Kurochkin I.V."/>
            <person name="Lareau L.F."/>
            <person name="Lazarevic D."/>
            <person name="Lipovich L."/>
            <person name="Liu J."/>
            <person name="Liuni S."/>
            <person name="McWilliam S."/>
            <person name="Madan Babu M."/>
            <person name="Madera M."/>
            <person name="Marchionni L."/>
            <person name="Matsuda H."/>
            <person name="Matsuzawa S."/>
            <person name="Miki H."/>
            <person name="Mignone F."/>
            <person name="Miyake S."/>
            <person name="Morris K."/>
            <person name="Mottagui-Tabar S."/>
            <person name="Mulder N."/>
            <person name="Nakano N."/>
            <person name="Nakauchi H."/>
            <person name="Ng P."/>
            <person name="Nilsson R."/>
            <person name="Nishiguchi S."/>
            <person name="Nishikawa S."/>
            <person name="Nori F."/>
            <person name="Ohara O."/>
            <person name="Okazaki Y."/>
            <person name="Orlando V."/>
            <person name="Pang K.C."/>
            <person name="Pavan W.J."/>
            <person name="Pavesi G."/>
            <person name="Pesole G."/>
            <person name="Petrovsky N."/>
            <person name="Piazza S."/>
            <person name="Reed J."/>
            <person name="Reid J.F."/>
            <person name="Ring B.Z."/>
            <person name="Ringwald M."/>
            <person name="Rost B."/>
            <person name="Ruan Y."/>
            <person name="Salzberg S.L."/>
            <person name="Sandelin A."/>
            <person name="Schneider C."/>
            <person name="Schoenbach C."/>
            <person name="Sekiguchi K."/>
            <person name="Semple C.A."/>
            <person name="Seno S."/>
            <person name="Sessa L."/>
            <person name="Sheng Y."/>
            <person name="Shibata Y."/>
            <person name="Shimada H."/>
            <person name="Shimada K."/>
            <person name="Silva D."/>
            <person name="Sinclair B."/>
            <person name="Sperling S."/>
            <person name="Stupka E."/>
            <person name="Sugiura K."/>
            <person name="Sultana R."/>
            <person name="Takenaka Y."/>
            <person name="Taki K."/>
            <person name="Tammoja K."/>
            <person name="Tan S.L."/>
            <person name="Tang S."/>
            <person name="Taylor M.S."/>
            <person name="Tegner J."/>
            <person name="Teichmann S.A."/>
            <person name="Ueda H.R."/>
            <person name="van Nimwegen E."/>
            <person name="Verardo R."/>
            <person name="Wei C.L."/>
            <person name="Yagi K."/>
            <person name="Yamanishi H."/>
            <person name="Zabarovsky E."/>
            <person name="Zhu S."/>
            <person name="Zimmer A."/>
            <person name="Hide W."/>
            <person name="Bult C."/>
            <person name="Grimmond S.M."/>
            <person name="Teasdale R.D."/>
            <person name="Liu E.T."/>
            <person name="Brusic V."/>
            <person name="Quackenbush J."/>
            <person name="Wahlestedt C."/>
            <person name="Mattick J.S."/>
            <person name="Hume D.A."/>
            <person name="Kai C."/>
            <person name="Sasaki D."/>
            <person name="Tomaru Y."/>
            <person name="Fukuda S."/>
            <person name="Kanamori-Katayama M."/>
            <person name="Suzuki M."/>
            <person name="Aoki J."/>
            <person name="Arakawa T."/>
            <person name="Iida J."/>
            <person name="Imamura K."/>
            <person name="Itoh M."/>
            <person name="Kato T."/>
            <person name="Kawaji H."/>
            <person name="Kawagashira N."/>
            <person name="Kawashima T."/>
            <person name="Kojima M."/>
            <person name="Kondo S."/>
            <person name="Konno H."/>
            <person name="Nakano K."/>
            <person name="Ninomiya N."/>
            <person name="Nishio T."/>
            <person name="Okada M."/>
            <person name="Plessy C."/>
            <person name="Shibata K."/>
            <person name="Shiraki T."/>
            <person name="Suzuki S."/>
            <person name="Tagami M."/>
            <person name="Waki K."/>
            <person name="Watahiki A."/>
            <person name="Okamura-Oho Y."/>
            <person name="Suzuki H."/>
            <person name="Kawai J."/>
            <person name="Hayashizaki Y."/>
        </authorList>
    </citation>
    <scope>NUCLEOTIDE SEQUENCE [LARGE SCALE MRNA] (ISOFORMS 2; 3; 4; 5; 6 AND 7)</scope>
    <source>
        <strain>C57BL/6J</strain>
        <tissue>Aorta</tissue>
        <tissue>Bone</tissue>
        <tissue>Cerebellum</tissue>
        <tissue>Medulla oblongata</tissue>
        <tissue>Spinal cord</tissue>
        <tissue>Thymus</tissue>
        <tissue>Vein</tissue>
    </source>
</reference>
<reference key="3">
    <citation type="journal article" date="2009" name="PLoS Biol.">
        <title>Lineage-specific biology revealed by a finished genome assembly of the mouse.</title>
        <authorList>
            <person name="Church D.M."/>
            <person name="Goodstadt L."/>
            <person name="Hillier L.W."/>
            <person name="Zody M.C."/>
            <person name="Goldstein S."/>
            <person name="She X."/>
            <person name="Bult C.J."/>
            <person name="Agarwala R."/>
            <person name="Cherry J.L."/>
            <person name="DiCuccio M."/>
            <person name="Hlavina W."/>
            <person name="Kapustin Y."/>
            <person name="Meric P."/>
            <person name="Maglott D."/>
            <person name="Birtle Z."/>
            <person name="Marques A.C."/>
            <person name="Graves T."/>
            <person name="Zhou S."/>
            <person name="Teague B."/>
            <person name="Potamousis K."/>
            <person name="Churas C."/>
            <person name="Place M."/>
            <person name="Herschleb J."/>
            <person name="Runnheim R."/>
            <person name="Forrest D."/>
            <person name="Amos-Landgraf J."/>
            <person name="Schwartz D.C."/>
            <person name="Cheng Z."/>
            <person name="Lindblad-Toh K."/>
            <person name="Eichler E.E."/>
            <person name="Ponting C.P."/>
        </authorList>
    </citation>
    <scope>NUCLEOTIDE SEQUENCE [LARGE SCALE GENOMIC DNA]</scope>
    <source>
        <strain>C57BL/6J</strain>
    </source>
</reference>
<reference key="4">
    <citation type="journal article" date="2007" name="Dev. Biol.">
        <title>C6ORF32 is upregulated during muscle cell differentiation and induces the formation of cellular filopodia.</title>
        <authorList>
            <person name="Yoon S."/>
            <person name="Molloy M.J."/>
            <person name="Wu M.P."/>
            <person name="Cowan D.B."/>
            <person name="Gussoni E."/>
        </authorList>
    </citation>
    <scope>FUNCTION</scope>
</reference>
<reference key="5">
    <citation type="journal article" date="2010" name="Cell">
        <title>A tissue-specific atlas of mouse protein phosphorylation and expression.</title>
        <authorList>
            <person name="Huttlin E.L."/>
            <person name="Jedrychowski M.P."/>
            <person name="Elias J.E."/>
            <person name="Goswami T."/>
            <person name="Rad R."/>
            <person name="Beausoleil S.A."/>
            <person name="Villen J."/>
            <person name="Haas W."/>
            <person name="Sowa M.E."/>
            <person name="Gygi S.P."/>
        </authorList>
    </citation>
    <scope>PHOSPHORYLATION [LARGE SCALE ANALYSIS] AT SER-46; SER-366 AND SER-582</scope>
    <scope>IDENTIFICATION BY MASS SPECTROMETRY [LARGE SCALE ANALYSIS]</scope>
    <source>
        <tissue>Brain</tissue>
        <tissue>Brown adipose tissue</tissue>
        <tissue>Kidney</tissue>
        <tissue>Lung</tissue>
        <tissue>Spleen</tissue>
    </source>
</reference>
<reference key="6">
    <citation type="journal article" date="2014" name="FASEB J.">
        <title>Fam65b is important for formation of the HDAC6-dysferlin protein complex during myogenic cell differentiation.</title>
        <authorList>
            <person name="Balasubramanian A."/>
            <person name="Kawahara G."/>
            <person name="Gupta V.A."/>
            <person name="Rozkalne A."/>
            <person name="Beauvais A."/>
            <person name="Kunkel L.M."/>
            <person name="Gussoni E."/>
        </authorList>
    </citation>
    <scope>INTERACTION WITH DYSF</scope>
    <scope>INDUCTION</scope>
</reference>
<reference key="7">
    <citation type="journal article" date="2014" name="Proc. Natl. Acad. Sci. U.S.A.">
        <title>FAM65B is a membrane-associated protein of hair cell stereocilia required for hearing.</title>
        <authorList>
            <person name="Diaz-Horta O."/>
            <person name="Subasioglu-Uzak A."/>
            <person name="Grati M."/>
            <person name="DeSmidt A."/>
            <person name="Foster J."/>
            <person name="Cao L."/>
            <person name="Bademci G."/>
            <person name="Tokgoz-Yilmaz S."/>
            <person name="Duman D."/>
            <person name="Cengiz F.B."/>
            <person name="Abad C."/>
            <person name="Mittal R."/>
            <person name="Blanton S."/>
            <person name="Liu X.Z."/>
            <person name="Farooq A."/>
            <person name="Walz K."/>
            <person name="Lu Z."/>
            <person name="Tekin M."/>
        </authorList>
    </citation>
    <scope>TISSUE SPECIFICITY</scope>
</reference>
<reference key="8">
    <citation type="journal article" date="2015" name="J. Cell Sci.">
        <title>Front-signal-dependent accumulation of the RHOA inhibitor FAM65B at leading edges polarizes neutrophils.</title>
        <authorList>
            <person name="Gao K."/>
            <person name="Tang W."/>
            <person name="Li Y."/>
            <person name="Zhang P."/>
            <person name="Wang D."/>
            <person name="Yu L."/>
            <person name="Wang C."/>
            <person name="Wu D."/>
        </authorList>
    </citation>
    <scope>FUNCTION</scope>
    <scope>DISRUPTION PHENOTYPE</scope>
</reference>
<reference key="9">
    <citation type="journal article" date="2016" name="Elife">
        <title>Murine Fam65b forms ring-like structures at the base of stereocilia critical for mechanosensory hair cell function.</title>
        <authorList>
            <person name="Zhao B."/>
            <person name="Wu Z."/>
            <person name="Mueller U."/>
        </authorList>
    </citation>
    <scope>FUNCTION</scope>
    <scope>SUBCELLULAR LOCATION</scope>
    <scope>INTERACTION WITH RHOA AND RHOC</scope>
    <scope>TISSUE SPECIFICITY</scope>
    <scope>DISRUPTION PHENOTYPE</scope>
    <scope>MUTAGENESIS OF 176-ARG-LEU-177</scope>
</reference>
<reference key="10">
    <citation type="journal article" date="2020" name="J. Med. Genet.">
        <title>A RIPOR2 in-frame deletion is a frequent and highly penetrant cause of adult-onset hearing loss.</title>
        <authorList>
            <person name="de Bruijn S.E."/>
            <person name="Smits J.J."/>
            <person name="Liu C."/>
            <person name="Lanting C.P."/>
            <person name="Beynon A.J."/>
            <person name="Blankevoort J."/>
            <person name="Oostrik J."/>
            <person name="Koole W."/>
            <person name="de Vrieze E."/>
            <person name="Cremers C.W.R.J."/>
            <person name="Cremers F.P.M."/>
            <person name="Roosing S."/>
            <person name="Yntema H.G."/>
            <person name="Kunst H.P.M."/>
            <person name="Zhao B."/>
            <person name="Pennings R.J.E."/>
            <person name="Kremer H."/>
        </authorList>
    </citation>
    <scope>TISSUE SPECIFICITY</scope>
    <scope>SUBCELLULAR LOCATION</scope>
    <scope>MUTAGENESIS OF 575-GLN--LYS-578</scope>
    <scope>HOMOMERIZATION</scope>
    <scope>INTERACTION WITH RHOC</scope>
</reference>
<proteinExistence type="evidence at protein level"/>
<feature type="chain" id="PRO_0000289115" description="Rho family-interacting cell polarization regulator 2">
    <location>
        <begin position="1"/>
        <end position="1078"/>
    </location>
</feature>
<feature type="region of interest" description="Involved in cell filopodia formation" evidence="2">
    <location>
        <begin position="80"/>
        <end position="138"/>
    </location>
</feature>
<feature type="region of interest" description="Disordered" evidence="4">
    <location>
        <begin position="488"/>
        <end position="534"/>
    </location>
</feature>
<feature type="coiled-coil region" evidence="3">
    <location>
        <begin position="108"/>
        <end position="137"/>
    </location>
</feature>
<feature type="compositionally biased region" description="Polar residues" evidence="4">
    <location>
        <begin position="488"/>
        <end position="508"/>
    </location>
</feature>
<feature type="compositionally biased region" description="Basic and acidic residues" evidence="4">
    <location>
        <begin position="509"/>
        <end position="525"/>
    </location>
</feature>
<feature type="modified residue" description="Phosphoserine" evidence="13">
    <location>
        <position position="46"/>
    </location>
</feature>
<feature type="modified residue" description="Phosphoserine" evidence="2">
    <location>
        <position position="62"/>
    </location>
</feature>
<feature type="modified residue" description="Phosphoserine" evidence="13">
    <location>
        <position position="366"/>
    </location>
</feature>
<feature type="modified residue" description="Phosphoserine" evidence="13">
    <location>
        <position position="582"/>
    </location>
</feature>
<feature type="splice variant" id="VSP_025907" description="In isoform 7." evidence="11">
    <location>
        <begin position="1"/>
        <end position="25"/>
    </location>
</feature>
<feature type="splice variant" id="VSP_025908" description="In isoform 5 and isoform 6." evidence="11">
    <original>MPPGTKRLRALGAFSA</original>
    <variation>MQFLDPEDLLDEEDDIFGE</variation>
    <location>
        <begin position="1"/>
        <end position="16"/>
    </location>
</feature>
<feature type="splice variant" id="VSP_025909" description="In isoform 5, isoform 6 and isoform 7." evidence="11">
    <location>
        <begin position="385"/>
        <end position="426"/>
    </location>
</feature>
<feature type="splice variant" id="VSP_025910" description="In isoform 3." evidence="11">
    <original>RWLRL</original>
    <variation>VGNGT</variation>
    <location>
        <begin position="385"/>
        <end position="389"/>
    </location>
</feature>
<feature type="splice variant" id="VSP_025911" description="In isoform 4." evidence="11">
    <original>RWLR</original>
    <variation>VSSV</variation>
    <location>
        <begin position="385"/>
        <end position="388"/>
    </location>
</feature>
<feature type="splice variant" id="VSP_025912" description="In isoform 4." evidence="11">
    <location>
        <begin position="389"/>
        <end position="1078"/>
    </location>
</feature>
<feature type="splice variant" id="VSP_025913" description="In isoform 3." evidence="11">
    <location>
        <begin position="390"/>
        <end position="1078"/>
    </location>
</feature>
<feature type="splice variant" id="VSP_025914" description="In isoform 2, isoform 5 and isoform 7." evidence="11">
    <original>CKPAGSRSRSSSLSLTVESALES</original>
    <variation>DAKHLEDQRLNDAASRMEITEGE</variation>
    <location>
        <begin position="650"/>
        <end position="672"/>
    </location>
</feature>
<feature type="splice variant" id="VSP_025915" description="In isoform 6." evidence="11">
    <original>CKPAGSRSRSSSLSLTVES</original>
    <variation>VSTFLGKKKKSDLVWKNAS</variation>
    <location>
        <begin position="650"/>
        <end position="668"/>
    </location>
</feature>
<feature type="splice variant" id="VSP_025916" description="In isoform 6." evidence="11">
    <location>
        <begin position="669"/>
        <end position="1078"/>
    </location>
</feature>
<feature type="splice variant" id="VSP_025917" description="In isoform 2, isoform 5 and isoform 7." evidence="11">
    <location>
        <begin position="673"/>
        <end position="1078"/>
    </location>
</feature>
<feature type="mutagenesis site" description="Inhibits interaction with RHOC. Reduces homooligomerization activity. Inhibits RHOC-dependent homooligomerization activity. Abolishes ability to rescue the morphological hair bundle defect in hair cell of RIPOR2-deficient mice." evidence="9">
    <original>RL</original>
    <variation>AA</variation>
    <location>
        <begin position="176"/>
        <end position="177"/>
    </location>
</feature>
<feature type="mutagenesis site" description="Loss of retention in the stereocilia, but does not visibly affect the stereocilia structure in the short term. Contrary to wild-type, does not rescue the morphological defects observed in hair cells of knockout mice, which include hair bundle polarity and cohesion and length of stereocilia." evidence="10">
    <location>
        <begin position="575"/>
        <end position="578"/>
    </location>
</feature>
<feature type="sequence conflict" description="In Ref. 1; BAC65551." evidence="12" ref="1">
    <original>R</original>
    <variation>S</variation>
    <location>
        <position position="534"/>
    </location>
</feature>
<protein>
    <recommendedName>
        <fullName evidence="2">Rho family-interacting cell polarization regulator 2</fullName>
    </recommendedName>
</protein>
<accession>Q80U16</accession>
<accession>A6PW01</accession>
<accession>A6PW03</accession>
<accession>Q3TQ58</accession>
<accession>Q5SY29</accession>
<accession>Q5SZV4</accession>
<accession>Q5T0J1</accession>
<accession>Q8BIM7</accession>
<accession>Q8BJ19</accession>
<accession>Q8BJ22</accession>
<accession>Q8BJ32</accession>
<accession>Q8BJ54</accession>
<keyword id="KW-0025">Alternative splicing</keyword>
<keyword id="KW-0130">Cell adhesion</keyword>
<keyword id="KW-1003">Cell membrane</keyword>
<keyword id="KW-0966">Cell projection</keyword>
<keyword id="KW-0145">Chemotaxis</keyword>
<keyword id="KW-0175">Coiled coil</keyword>
<keyword id="KW-0963">Cytoplasm</keyword>
<keyword id="KW-0206">Cytoskeleton</keyword>
<keyword id="KW-0221">Differentiation</keyword>
<keyword id="KW-1009">Hearing</keyword>
<keyword id="KW-0472">Membrane</keyword>
<keyword id="KW-0517">Myogenesis</keyword>
<keyword id="KW-0597">Phosphoprotein</keyword>
<keyword id="KW-1185">Reference proteome</keyword>
<keyword id="KW-0734">Signal transduction inhibitor</keyword>
<evidence type="ECO:0000250" key="1">
    <source>
        <dbReference type="UniProtKB" id="Q7TP54"/>
    </source>
</evidence>
<evidence type="ECO:0000250" key="2">
    <source>
        <dbReference type="UniProtKB" id="Q9Y4F9"/>
    </source>
</evidence>
<evidence type="ECO:0000255" key="3"/>
<evidence type="ECO:0000256" key="4">
    <source>
        <dbReference type="SAM" id="MobiDB-lite"/>
    </source>
</evidence>
<evidence type="ECO:0000269" key="5">
    <source>
    </source>
</evidence>
<evidence type="ECO:0000269" key="6">
    <source>
    </source>
</evidence>
<evidence type="ECO:0000269" key="7">
    <source>
    </source>
</evidence>
<evidence type="ECO:0000269" key="8">
    <source>
    </source>
</evidence>
<evidence type="ECO:0000269" key="9">
    <source>
    </source>
</evidence>
<evidence type="ECO:0000269" key="10">
    <source>
    </source>
</evidence>
<evidence type="ECO:0000303" key="11">
    <source>
    </source>
</evidence>
<evidence type="ECO:0000305" key="12"/>
<evidence type="ECO:0007744" key="13">
    <source>
    </source>
</evidence>
<dbReference type="EMBL" id="AK122269">
    <property type="protein sequence ID" value="BAC65551.1"/>
    <property type="status" value="ALT_INIT"/>
    <property type="molecule type" value="mRNA"/>
</dbReference>
<dbReference type="EMBL" id="AK031928">
    <property type="protein sequence ID" value="BAC27606.1"/>
    <property type="molecule type" value="mRNA"/>
</dbReference>
<dbReference type="EMBL" id="AK036452">
    <property type="protein sequence ID" value="BAC29436.1"/>
    <property type="molecule type" value="mRNA"/>
</dbReference>
<dbReference type="EMBL" id="AK039271">
    <property type="protein sequence ID" value="BAC30301.1"/>
    <property type="molecule type" value="mRNA"/>
</dbReference>
<dbReference type="EMBL" id="AK040887">
    <property type="protein sequence ID" value="BAC30732.1"/>
    <property type="molecule type" value="mRNA"/>
</dbReference>
<dbReference type="EMBL" id="AK041665">
    <property type="protein sequence ID" value="BAC31025.1"/>
    <property type="molecule type" value="mRNA"/>
</dbReference>
<dbReference type="EMBL" id="AK163880">
    <property type="protein sequence ID" value="BAE37527.1"/>
    <property type="molecule type" value="mRNA"/>
</dbReference>
<dbReference type="EMBL" id="AL591851">
    <property type="protein sequence ID" value="CAI25708.2"/>
    <property type="molecule type" value="Genomic_DNA"/>
</dbReference>
<dbReference type="EMBL" id="AL513014">
    <property type="protein sequence ID" value="CAI25708.2"/>
    <property type="status" value="JOINED"/>
    <property type="molecule type" value="Genomic_DNA"/>
</dbReference>
<dbReference type="EMBL" id="AL513014">
    <property type="protein sequence ID" value="CAI25774.2"/>
    <property type="molecule type" value="Genomic_DNA"/>
</dbReference>
<dbReference type="EMBL" id="AL589699">
    <property type="protein sequence ID" value="CAI25774.2"/>
    <property type="status" value="JOINED"/>
    <property type="molecule type" value="Genomic_DNA"/>
</dbReference>
<dbReference type="EMBL" id="AL513014">
    <property type="protein sequence ID" value="CAI25775.2"/>
    <property type="molecule type" value="Genomic_DNA"/>
</dbReference>
<dbReference type="EMBL" id="AL591851">
    <property type="protein sequence ID" value="CAI25775.2"/>
    <property type="status" value="JOINED"/>
    <property type="molecule type" value="Genomic_DNA"/>
</dbReference>
<dbReference type="EMBL" id="AL589699">
    <property type="protein sequence ID" value="CAI26080.2"/>
    <property type="molecule type" value="Genomic_DNA"/>
</dbReference>
<dbReference type="EMBL" id="AL513014">
    <property type="protein sequence ID" value="CAI26080.2"/>
    <property type="status" value="JOINED"/>
    <property type="molecule type" value="Genomic_DNA"/>
</dbReference>
<dbReference type="EMBL" id="AL513014">
    <property type="protein sequence ID" value="CAO77914.1"/>
    <property type="molecule type" value="Genomic_DNA"/>
</dbReference>
<dbReference type="EMBL" id="AL513014">
    <property type="protein sequence ID" value="CAO77916.1"/>
    <property type="molecule type" value="Genomic_DNA"/>
</dbReference>
<dbReference type="EMBL" id="AL589699">
    <property type="protein sequence ID" value="CAO77916.1"/>
    <property type="status" value="JOINED"/>
    <property type="molecule type" value="Genomic_DNA"/>
</dbReference>
<dbReference type="CCDS" id="CCDS26377.2">
    <molecule id="Q80U16-5"/>
</dbReference>
<dbReference type="CCDS" id="CCDS36622.1">
    <molecule id="Q80U16-1"/>
</dbReference>
<dbReference type="CCDS" id="CCDS36623.1">
    <molecule id="Q80U16-2"/>
</dbReference>
<dbReference type="RefSeq" id="NP_001073850.1">
    <molecule id="Q80U16-2"/>
    <property type="nucleotide sequence ID" value="NM_001080381.1"/>
</dbReference>
<dbReference type="RefSeq" id="NP_001273029.1">
    <property type="nucleotide sequence ID" value="NM_001286100.1"/>
</dbReference>
<dbReference type="RefSeq" id="NP_001273030.1">
    <molecule id="Q80U16-7"/>
    <property type="nucleotide sequence ID" value="NM_001286101.1"/>
</dbReference>
<dbReference type="RefSeq" id="NP_083955.1">
    <molecule id="Q80U16-1"/>
    <property type="nucleotide sequence ID" value="NM_029679.2"/>
</dbReference>
<dbReference type="RefSeq" id="NP_848773.3">
    <molecule id="Q80U16-5"/>
    <property type="nucleotide sequence ID" value="NM_178658.5"/>
</dbReference>
<dbReference type="BioGRID" id="228735">
    <property type="interactions" value="2"/>
</dbReference>
<dbReference type="FunCoup" id="Q80U16">
    <property type="interactions" value="279"/>
</dbReference>
<dbReference type="STRING" id="10090.ENSMUSP00000106013"/>
<dbReference type="iPTMnet" id="Q80U16"/>
<dbReference type="PhosphoSitePlus" id="Q80U16"/>
<dbReference type="jPOST" id="Q80U16"/>
<dbReference type="PaxDb" id="10090-ENSMUSP00000106013"/>
<dbReference type="ProteomicsDB" id="253316">
    <molecule id="Q80U16-1"/>
</dbReference>
<dbReference type="ProteomicsDB" id="253317">
    <molecule id="Q80U16-2"/>
</dbReference>
<dbReference type="ProteomicsDB" id="253318">
    <molecule id="Q80U16-3"/>
</dbReference>
<dbReference type="ProteomicsDB" id="253319">
    <molecule id="Q80U16-4"/>
</dbReference>
<dbReference type="ProteomicsDB" id="253320">
    <molecule id="Q80U16-5"/>
</dbReference>
<dbReference type="ProteomicsDB" id="253321">
    <molecule id="Q80U16-6"/>
</dbReference>
<dbReference type="ProteomicsDB" id="253322">
    <molecule id="Q80U16-7"/>
</dbReference>
<dbReference type="Antibodypedia" id="25358">
    <property type="antibodies" value="176 antibodies from 28 providers"/>
</dbReference>
<dbReference type="Ensembl" id="ENSMUST00000038477.7">
    <molecule id="Q80U16-2"/>
    <property type="protein sequence ID" value="ENSMUSP00000043663.7"/>
    <property type="gene ID" value="ENSMUSG00000036006.21"/>
</dbReference>
<dbReference type="Ensembl" id="ENSMUST00000058009.16">
    <molecule id="Q80U16-3"/>
    <property type="protein sequence ID" value="ENSMUSP00000051342.10"/>
    <property type="gene ID" value="ENSMUSG00000036006.21"/>
</dbReference>
<dbReference type="Ensembl" id="ENSMUST00000091694.10">
    <molecule id="Q80U16-5"/>
    <property type="protein sequence ID" value="ENSMUSP00000089286.4"/>
    <property type="gene ID" value="ENSMUSG00000036006.21"/>
</dbReference>
<dbReference type="Ensembl" id="ENSMUST00000110384.9">
    <molecule id="Q80U16-1"/>
    <property type="protein sequence ID" value="ENSMUSP00000106013.3"/>
    <property type="gene ID" value="ENSMUSG00000036006.21"/>
</dbReference>
<dbReference type="GeneID" id="193385"/>
<dbReference type="KEGG" id="mmu:193385"/>
<dbReference type="UCSC" id="uc007pwa.2">
    <molecule id="Q80U16-6"/>
    <property type="organism name" value="mouse"/>
</dbReference>
<dbReference type="UCSC" id="uc007pwb.2">
    <molecule id="Q80U16-5"/>
    <property type="organism name" value="mouse"/>
</dbReference>
<dbReference type="UCSC" id="uc007pwc.1">
    <molecule id="Q80U16-4"/>
    <property type="organism name" value="mouse"/>
</dbReference>
<dbReference type="UCSC" id="uc007pwd.1">
    <molecule id="Q80U16-2"/>
    <property type="organism name" value="mouse"/>
</dbReference>
<dbReference type="UCSC" id="uc007pwe.1">
    <molecule id="Q80U16-1"/>
    <property type="organism name" value="mouse"/>
</dbReference>
<dbReference type="UCSC" id="uc011yxo.2">
    <molecule id="Q80U16-7"/>
    <property type="organism name" value="mouse"/>
</dbReference>
<dbReference type="AGR" id="MGI:2444879"/>
<dbReference type="CTD" id="9750"/>
<dbReference type="MGI" id="MGI:2444879">
    <property type="gene designation" value="Ripor2"/>
</dbReference>
<dbReference type="VEuPathDB" id="HostDB:ENSMUSG00000036006"/>
<dbReference type="eggNOG" id="ENOG502QQ7T">
    <property type="taxonomic scope" value="Eukaryota"/>
</dbReference>
<dbReference type="GeneTree" id="ENSGT00940000153717"/>
<dbReference type="HOGENOM" id="CLU_432085_0_0_1"/>
<dbReference type="InParanoid" id="Q80U16"/>
<dbReference type="OMA" id="QSRKGAC"/>
<dbReference type="OrthoDB" id="9999654at2759"/>
<dbReference type="PhylomeDB" id="Q80U16"/>
<dbReference type="TreeFam" id="TF329332"/>
<dbReference type="BioGRID-ORCS" id="193385">
    <property type="hits" value="2 hits in 75 CRISPR screens"/>
</dbReference>
<dbReference type="ChiTaRS" id="Fam65b">
    <property type="organism name" value="mouse"/>
</dbReference>
<dbReference type="PRO" id="PR:Q80U16"/>
<dbReference type="Proteomes" id="UP000000589">
    <property type="component" value="Chromosome 13"/>
</dbReference>
<dbReference type="RNAct" id="Q80U16">
    <property type="molecule type" value="protein"/>
</dbReference>
<dbReference type="Bgee" id="ENSMUSG00000036006">
    <property type="expression patterns" value="Expressed in lateral septal nucleus and 234 other cell types or tissues"/>
</dbReference>
<dbReference type="ExpressionAtlas" id="Q80U16">
    <property type="expression patterns" value="baseline and differential"/>
</dbReference>
<dbReference type="GO" id="GO:0016324">
    <property type="term" value="C:apical plasma membrane"/>
    <property type="evidence" value="ECO:0000266"/>
    <property type="project" value="MGI"/>
</dbReference>
<dbReference type="GO" id="GO:0005737">
    <property type="term" value="C:cytoplasm"/>
    <property type="evidence" value="ECO:0000250"/>
    <property type="project" value="UniProtKB"/>
</dbReference>
<dbReference type="GO" id="GO:0005856">
    <property type="term" value="C:cytoskeleton"/>
    <property type="evidence" value="ECO:0000250"/>
    <property type="project" value="UniProtKB"/>
</dbReference>
<dbReference type="GO" id="GO:0005829">
    <property type="term" value="C:cytosol"/>
    <property type="evidence" value="ECO:0000304"/>
    <property type="project" value="Reactome"/>
</dbReference>
<dbReference type="GO" id="GO:0030175">
    <property type="term" value="C:filopodium"/>
    <property type="evidence" value="ECO:0000250"/>
    <property type="project" value="UniProtKB"/>
</dbReference>
<dbReference type="GO" id="GO:0032420">
    <property type="term" value="C:stereocilium"/>
    <property type="evidence" value="ECO:0000314"/>
    <property type="project" value="UniProtKB"/>
</dbReference>
<dbReference type="GO" id="GO:0060171">
    <property type="term" value="C:stereocilium membrane"/>
    <property type="evidence" value="ECO:0000266"/>
    <property type="project" value="MGI"/>
</dbReference>
<dbReference type="GO" id="GO:0071889">
    <property type="term" value="F:14-3-3 protein binding"/>
    <property type="evidence" value="ECO:0000250"/>
    <property type="project" value="UniProtKB"/>
</dbReference>
<dbReference type="GO" id="GO:0042802">
    <property type="term" value="F:identical protein binding"/>
    <property type="evidence" value="ECO:0000315"/>
    <property type="project" value="UniProtKB"/>
</dbReference>
<dbReference type="GO" id="GO:0060088">
    <property type="term" value="P:auditory receptor cell stereocilium organization"/>
    <property type="evidence" value="ECO:0000315"/>
    <property type="project" value="UniProtKB"/>
</dbReference>
<dbReference type="GO" id="GO:0007155">
    <property type="term" value="P:cell adhesion"/>
    <property type="evidence" value="ECO:0007669"/>
    <property type="project" value="UniProtKB-KW"/>
</dbReference>
<dbReference type="GO" id="GO:1990869">
    <property type="term" value="P:cellular response to chemokine"/>
    <property type="evidence" value="ECO:0000315"/>
    <property type="project" value="UniProtKB"/>
</dbReference>
<dbReference type="GO" id="GO:0071260">
    <property type="term" value="P:cellular response to mechanical stimulus"/>
    <property type="evidence" value="ECO:0000315"/>
    <property type="project" value="UniProtKB"/>
</dbReference>
<dbReference type="GO" id="GO:0006935">
    <property type="term" value="P:chemotaxis"/>
    <property type="evidence" value="ECO:0007669"/>
    <property type="project" value="UniProtKB-KW"/>
</dbReference>
<dbReference type="GO" id="GO:0045184">
    <property type="term" value="P:establishment of protein localization"/>
    <property type="evidence" value="ECO:0000315"/>
    <property type="project" value="UniProtKB"/>
</dbReference>
<dbReference type="GO" id="GO:0007517">
    <property type="term" value="P:muscle organ development"/>
    <property type="evidence" value="ECO:0007669"/>
    <property type="project" value="UniProtKB-KW"/>
</dbReference>
<dbReference type="GO" id="GO:0007162">
    <property type="term" value="P:negative regulation of cell adhesion"/>
    <property type="evidence" value="ECO:0000315"/>
    <property type="project" value="UniProtKB"/>
</dbReference>
<dbReference type="GO" id="GO:1903904">
    <property type="term" value="P:negative regulation of establishment of T cell polarity"/>
    <property type="evidence" value="ECO:0000250"/>
    <property type="project" value="UniProtKB"/>
</dbReference>
<dbReference type="GO" id="GO:1905872">
    <property type="term" value="P:negative regulation of protein localization to cell leading edge"/>
    <property type="evidence" value="ECO:0000315"/>
    <property type="project" value="UniProtKB"/>
</dbReference>
<dbReference type="GO" id="GO:2001107">
    <property type="term" value="P:negative regulation of Rho guanyl-nucleotide exchange factor activity"/>
    <property type="evidence" value="ECO:0000315"/>
    <property type="project" value="UniProtKB"/>
</dbReference>
<dbReference type="GO" id="GO:0035024">
    <property type="term" value="P:negative regulation of Rho protein signal transduction"/>
    <property type="evidence" value="ECO:0000315"/>
    <property type="project" value="UniProtKB"/>
</dbReference>
<dbReference type="GO" id="GO:2000405">
    <property type="term" value="P:negative regulation of T cell migration"/>
    <property type="evidence" value="ECO:0000250"/>
    <property type="project" value="UniProtKB"/>
</dbReference>
<dbReference type="GO" id="GO:0051491">
    <property type="term" value="P:positive regulation of filopodium assembly"/>
    <property type="evidence" value="ECO:0000315"/>
    <property type="project" value="UniProtKB"/>
</dbReference>
<dbReference type="GO" id="GO:0045663">
    <property type="term" value="P:positive regulation of myoblast differentiation"/>
    <property type="evidence" value="ECO:0000250"/>
    <property type="project" value="UniProtKB"/>
</dbReference>
<dbReference type="GO" id="GO:1901741">
    <property type="term" value="P:positive regulation of myoblast fusion"/>
    <property type="evidence" value="ECO:0000250"/>
    <property type="project" value="UniProtKB"/>
</dbReference>
<dbReference type="GO" id="GO:0090023">
    <property type="term" value="P:positive regulation of neutrophil chemotaxis"/>
    <property type="evidence" value="ECO:0000315"/>
    <property type="project" value="UniProtKB"/>
</dbReference>
<dbReference type="GO" id="GO:2000391">
    <property type="term" value="P:positive regulation of neutrophil extravasation"/>
    <property type="evidence" value="ECO:0000315"/>
    <property type="project" value="UniProtKB"/>
</dbReference>
<dbReference type="GO" id="GO:0051260">
    <property type="term" value="P:protein homooligomerization"/>
    <property type="evidence" value="ECO:0000314"/>
    <property type="project" value="UniProtKB"/>
</dbReference>
<dbReference type="GO" id="GO:2000114">
    <property type="term" value="P:regulation of establishment of cell polarity"/>
    <property type="evidence" value="ECO:0000315"/>
    <property type="project" value="UniProtKB"/>
</dbReference>
<dbReference type="GO" id="GO:0007605">
    <property type="term" value="P:sensory perception of sound"/>
    <property type="evidence" value="ECO:0000315"/>
    <property type="project" value="UniProtKB"/>
</dbReference>
<dbReference type="FunFam" id="1.25.10.10:FF:000191">
    <property type="entry name" value="RHO family interacting cell polarization regulator 2"/>
    <property type="match status" value="1"/>
</dbReference>
<dbReference type="Gene3D" id="1.25.10.10">
    <property type="entry name" value="Leucine-rich Repeat Variant"/>
    <property type="match status" value="1"/>
</dbReference>
<dbReference type="InterPro" id="IPR011989">
    <property type="entry name" value="ARM-like"/>
</dbReference>
<dbReference type="InterPro" id="IPR016024">
    <property type="entry name" value="ARM-type_fold"/>
</dbReference>
<dbReference type="InterPro" id="IPR031780">
    <property type="entry name" value="FAM65_N"/>
</dbReference>
<dbReference type="InterPro" id="IPR026136">
    <property type="entry name" value="RIPOR3"/>
</dbReference>
<dbReference type="PANTHER" id="PTHR15829">
    <property type="entry name" value="PROTEIN KINASE PKN/PRK1, EFFECTOR"/>
    <property type="match status" value="1"/>
</dbReference>
<dbReference type="PANTHER" id="PTHR15829:SF2">
    <property type="entry name" value="RHO FAMILY-INTERACTING CELL POLARIZATION REGULATOR 2"/>
    <property type="match status" value="1"/>
</dbReference>
<dbReference type="Pfam" id="PF15903">
    <property type="entry name" value="PL48"/>
    <property type="match status" value="1"/>
</dbReference>
<dbReference type="SUPFAM" id="SSF48371">
    <property type="entry name" value="ARM repeat"/>
    <property type="match status" value="1"/>
</dbReference>
<sequence length="1078" mass="118970">MPPGTKRLRALGAFSAGLPTRLPEIMLVGSQSFSPGGPNGIIRSQSFAGFSGLQERRSRCNSFIENASALKKPQAKLKKMHNLGHKNNNTPKEPQPKRVEEVYRALKNGLDEYLEFHQTELDKLTAQLKDMKRNSRLGVLYDLDKQIKTIERYMRRLEFHISKVDELYEAYCIQRRLQDGASKMKQAFATSPASKAARESLSEINRSYKEYTENMCAIEAELESLLGEFSIKMKGLAGFARLCPGDQYEIFMKYGRQRWKLKGKIEVNGKQSWDGAETVFLPLIVGFISIKVTELKGLATHILVGSVTCETKELFAARPQVVAVDINDLGTIKLNLEITWYPFDVEDTTPSSGPGNKTAALQRRMSMYSQGTPETPTFKDQSFFRWLRLSVLSALRDTFFATLHHNHSVGDLPSLSLNPKALLEFYSNLPDDIFESGKAAEEKRPLSLSFSDLQDGDCVFTSSSATSPSSSHSAHPEITITPAELTHSSLSSQNEGTEDSSSASSRNSLGEDHEPKSHPKSDTVEPGKPGVATRSGTESLFLESSVAEALLQESDEASELKPVELDTFEGNITKQLVKRLTSAEGPVTTDKLFFEGSVGSESEAGRSFLDGSLEDAFNGLFLALDPHKKQYKEFQDLNQEVTHLDDVLKCKPAGSRSRSSSLSLTVESALESFDFLNTSDFDEEEEDGDDVCHVGGGADSVFSDTETEKSGYRSVHPEARGHLSEALTEDTGVGTSVAGSPLPLTTGNESLDITIVKHLQYCTQLIQQIVFSSKTPFVARSLLEKLSRQVLVMQKLAAVSDENLGNITSVVEAIPEFHKKLSLLAFWTKCCSPSGVYHSSAARLIKQLEASFARSINKDYPGLAEPVFRTLVSQILDRAEPLLSSSLSSEVITVFQYYSFFTSHGVSDLETYLGQLTRQVAMVQTLQSLRDEKLLQTMSDLAPSNLPAQQEVLRTLALLLTRDDNEVSEAVTLYLAAASKNEHFREKALLYYCEALTKANLQLQKAACLALKSLEATESIKMLVTLCQSDTEEIRTVASETLLSLGEDGRLAYEQLDKFPRDCVKVGGRHGTEVATAF</sequence>
<name>RIPR2_MOUSE</name>
<gene>
    <name evidence="2" type="primary">Ripor2</name>
    <name type="synonym">Fam65b</name>
    <name type="synonym">Kiaa0386</name>
</gene>